<comment type="function">
    <text evidence="1">Catalyzes the reversible interconversion of serine and glycine with tetrahydrofolate (THF) serving as the one-carbon carrier. This reaction serves as the major source of one-carbon groups required for the biosynthesis of purines, thymidylate, methionine, and other important biomolecules. Also exhibits THF-independent aldolase activity toward beta-hydroxyamino acids, producing glycine and aldehydes, via a retro-aldol mechanism.</text>
</comment>
<comment type="catalytic activity">
    <reaction evidence="1">
        <text>(6R)-5,10-methylene-5,6,7,8-tetrahydrofolate + glycine + H2O = (6S)-5,6,7,8-tetrahydrofolate + L-serine</text>
        <dbReference type="Rhea" id="RHEA:15481"/>
        <dbReference type="ChEBI" id="CHEBI:15377"/>
        <dbReference type="ChEBI" id="CHEBI:15636"/>
        <dbReference type="ChEBI" id="CHEBI:33384"/>
        <dbReference type="ChEBI" id="CHEBI:57305"/>
        <dbReference type="ChEBI" id="CHEBI:57453"/>
        <dbReference type="EC" id="2.1.2.1"/>
    </reaction>
</comment>
<comment type="cofactor">
    <cofactor evidence="1">
        <name>pyridoxal 5'-phosphate</name>
        <dbReference type="ChEBI" id="CHEBI:597326"/>
    </cofactor>
</comment>
<comment type="pathway">
    <text evidence="1">One-carbon metabolism; tetrahydrofolate interconversion.</text>
</comment>
<comment type="pathway">
    <text evidence="1">Amino-acid biosynthesis; glycine biosynthesis; glycine from L-serine: step 1/1.</text>
</comment>
<comment type="subunit">
    <text evidence="1">Homodimer.</text>
</comment>
<comment type="subcellular location">
    <subcellularLocation>
        <location evidence="1">Cytoplasm</location>
    </subcellularLocation>
</comment>
<comment type="similarity">
    <text evidence="1">Belongs to the SHMT family.</text>
</comment>
<reference key="1">
    <citation type="journal article" date="2009" name="Proc. Natl. Acad. Sci. U.S.A.">
        <title>The mosaic genome structure of the Wolbachia wRi strain infecting Drosophila simulans.</title>
        <authorList>
            <person name="Klasson L."/>
            <person name="Westberg J."/>
            <person name="Sapountzis P."/>
            <person name="Naeslund K."/>
            <person name="Lutnaes Y."/>
            <person name="Darby A.C."/>
            <person name="Veneti Z."/>
            <person name="Chen L."/>
            <person name="Braig H.R."/>
            <person name="Garrett R."/>
            <person name="Bourtzis K."/>
            <person name="Andersson S.G."/>
        </authorList>
    </citation>
    <scope>NUCLEOTIDE SEQUENCE [LARGE SCALE GENOMIC DNA]</scope>
    <source>
        <strain>wRi</strain>
    </source>
</reference>
<gene>
    <name evidence="1" type="primary">glyA</name>
    <name type="ordered locus">WRi_010650</name>
</gene>
<name>GLYA_WOLWR</name>
<organism>
    <name type="scientific">Wolbachia sp. subsp. Drosophila simulans (strain wRi)</name>
    <dbReference type="NCBI Taxonomy" id="66084"/>
    <lineage>
        <taxon>Bacteria</taxon>
        <taxon>Pseudomonadati</taxon>
        <taxon>Pseudomonadota</taxon>
        <taxon>Alphaproteobacteria</taxon>
        <taxon>Rickettsiales</taxon>
        <taxon>Anaplasmataceae</taxon>
        <taxon>Wolbachieae</taxon>
        <taxon>Wolbachia</taxon>
    </lineage>
</organism>
<evidence type="ECO:0000255" key="1">
    <source>
        <dbReference type="HAMAP-Rule" id="MF_00051"/>
    </source>
</evidence>
<feature type="chain" id="PRO_1000117658" description="Serine hydroxymethyltransferase">
    <location>
        <begin position="1"/>
        <end position="425"/>
    </location>
</feature>
<feature type="binding site" evidence="1">
    <location>
        <position position="128"/>
    </location>
    <ligand>
        <name>(6S)-5,6,7,8-tetrahydrofolate</name>
        <dbReference type="ChEBI" id="CHEBI:57453"/>
    </ligand>
</feature>
<feature type="binding site" evidence="1">
    <location>
        <begin position="132"/>
        <end position="134"/>
    </location>
    <ligand>
        <name>(6S)-5,6,7,8-tetrahydrofolate</name>
        <dbReference type="ChEBI" id="CHEBI:57453"/>
    </ligand>
</feature>
<feature type="site" description="Plays an important role in substrate specificity" evidence="1">
    <location>
        <position position="236"/>
    </location>
</feature>
<feature type="modified residue" description="N6-(pyridoxal phosphate)lysine" evidence="1">
    <location>
        <position position="237"/>
    </location>
</feature>
<protein>
    <recommendedName>
        <fullName evidence="1">Serine hydroxymethyltransferase</fullName>
        <shortName evidence="1">SHMT</shortName>
        <shortName evidence="1">Serine methylase</shortName>
        <ecNumber evidence="1">2.1.2.1</ecNumber>
    </recommendedName>
</protein>
<accession>C0R4C7</accession>
<proteinExistence type="inferred from homology"/>
<keyword id="KW-0028">Amino-acid biosynthesis</keyword>
<keyword id="KW-0963">Cytoplasm</keyword>
<keyword id="KW-0554">One-carbon metabolism</keyword>
<keyword id="KW-0663">Pyridoxal phosphate</keyword>
<keyword id="KW-0808">Transferase</keyword>
<dbReference type="EC" id="2.1.2.1" evidence="1"/>
<dbReference type="EMBL" id="CP001391">
    <property type="protein sequence ID" value="ACN95769.1"/>
    <property type="molecule type" value="Genomic_DNA"/>
</dbReference>
<dbReference type="RefSeq" id="WP_012673343.1">
    <property type="nucleotide sequence ID" value="NZ_MKIF01000077.1"/>
</dbReference>
<dbReference type="SMR" id="C0R4C7"/>
<dbReference type="STRING" id="66084.WRi_010650"/>
<dbReference type="KEGG" id="wri:WRi_010650"/>
<dbReference type="HOGENOM" id="CLU_022477_2_1_5"/>
<dbReference type="UniPathway" id="UPA00193"/>
<dbReference type="UniPathway" id="UPA00288">
    <property type="reaction ID" value="UER01023"/>
</dbReference>
<dbReference type="Proteomes" id="UP000001293">
    <property type="component" value="Chromosome"/>
</dbReference>
<dbReference type="GO" id="GO:0005829">
    <property type="term" value="C:cytosol"/>
    <property type="evidence" value="ECO:0007669"/>
    <property type="project" value="TreeGrafter"/>
</dbReference>
<dbReference type="GO" id="GO:0004372">
    <property type="term" value="F:glycine hydroxymethyltransferase activity"/>
    <property type="evidence" value="ECO:0007669"/>
    <property type="project" value="UniProtKB-UniRule"/>
</dbReference>
<dbReference type="GO" id="GO:0030170">
    <property type="term" value="F:pyridoxal phosphate binding"/>
    <property type="evidence" value="ECO:0007669"/>
    <property type="project" value="UniProtKB-UniRule"/>
</dbReference>
<dbReference type="GO" id="GO:0019264">
    <property type="term" value="P:glycine biosynthetic process from serine"/>
    <property type="evidence" value="ECO:0007669"/>
    <property type="project" value="UniProtKB-UniRule"/>
</dbReference>
<dbReference type="GO" id="GO:0035999">
    <property type="term" value="P:tetrahydrofolate interconversion"/>
    <property type="evidence" value="ECO:0007669"/>
    <property type="project" value="UniProtKB-UniRule"/>
</dbReference>
<dbReference type="CDD" id="cd00378">
    <property type="entry name" value="SHMT"/>
    <property type="match status" value="1"/>
</dbReference>
<dbReference type="FunFam" id="3.40.640.10:FF:000001">
    <property type="entry name" value="Serine hydroxymethyltransferase"/>
    <property type="match status" value="1"/>
</dbReference>
<dbReference type="Gene3D" id="3.90.1150.10">
    <property type="entry name" value="Aspartate Aminotransferase, domain 1"/>
    <property type="match status" value="1"/>
</dbReference>
<dbReference type="Gene3D" id="3.40.640.10">
    <property type="entry name" value="Type I PLP-dependent aspartate aminotransferase-like (Major domain)"/>
    <property type="match status" value="1"/>
</dbReference>
<dbReference type="HAMAP" id="MF_00051">
    <property type="entry name" value="SHMT"/>
    <property type="match status" value="1"/>
</dbReference>
<dbReference type="InterPro" id="IPR015424">
    <property type="entry name" value="PyrdxlP-dep_Trfase"/>
</dbReference>
<dbReference type="InterPro" id="IPR015421">
    <property type="entry name" value="PyrdxlP-dep_Trfase_major"/>
</dbReference>
<dbReference type="InterPro" id="IPR015422">
    <property type="entry name" value="PyrdxlP-dep_Trfase_small"/>
</dbReference>
<dbReference type="InterPro" id="IPR001085">
    <property type="entry name" value="Ser_HO-MeTrfase"/>
</dbReference>
<dbReference type="InterPro" id="IPR049943">
    <property type="entry name" value="Ser_HO-MeTrfase-like"/>
</dbReference>
<dbReference type="InterPro" id="IPR019798">
    <property type="entry name" value="Ser_HO-MeTrfase_PLP_BS"/>
</dbReference>
<dbReference type="InterPro" id="IPR039429">
    <property type="entry name" value="SHMT-like_dom"/>
</dbReference>
<dbReference type="NCBIfam" id="NF000586">
    <property type="entry name" value="PRK00011.1"/>
    <property type="match status" value="1"/>
</dbReference>
<dbReference type="PANTHER" id="PTHR11680">
    <property type="entry name" value="SERINE HYDROXYMETHYLTRANSFERASE"/>
    <property type="match status" value="1"/>
</dbReference>
<dbReference type="PANTHER" id="PTHR11680:SF35">
    <property type="entry name" value="SERINE HYDROXYMETHYLTRANSFERASE 1"/>
    <property type="match status" value="1"/>
</dbReference>
<dbReference type="Pfam" id="PF00464">
    <property type="entry name" value="SHMT"/>
    <property type="match status" value="1"/>
</dbReference>
<dbReference type="PIRSF" id="PIRSF000412">
    <property type="entry name" value="SHMT"/>
    <property type="match status" value="1"/>
</dbReference>
<dbReference type="SUPFAM" id="SSF53383">
    <property type="entry name" value="PLP-dependent transferases"/>
    <property type="match status" value="1"/>
</dbReference>
<dbReference type="PROSITE" id="PS00096">
    <property type="entry name" value="SHMT"/>
    <property type="match status" value="1"/>
</dbReference>
<sequence>MMSVLKKICGSKNSLKSFDNEVYQSIEKELQRQKSQLQLIASENFASKAVMEAQGSFLTNKYAEGYPGKRYYCGCEHVDKIESLAIERLCKLFGVKFANVQPHSGSQANQAVFASLLTPGDTILGLSLSCGGHLTHGAAPSLSGKWFKSIQYTVNKDTYLLDMDEIEKLALEHKPKLIIAGASAYPRKMDFKRFREIADKVGAYLLADIAHYAGLIAAGEYPSPAEYAHVMTSTTHKTLRGPRGGIVMTNDEILHKKIQSAVFPGLQGGPLMHVIAAKAVAFKEALAPEFKTYSKKVVENAKVLAQELQKHGLDIITGGTDSHIVLVDLRSQKLTGKDVVDSLERAGITCNKNSVPFDTAKPTITSGLRFGTAAETTRGLEAENFKEIADLINEVIQGLISGNSSSVEKAVKAKVERICSNFPIY</sequence>